<accession>C5C4E1</accession>
<organism>
    <name type="scientific">Beutenbergia cavernae (strain ATCC BAA-8 / DSM 12333 / CCUG 43141 / JCM 11478 / NBRC 16432 / NCIMB 13614 / HKI 0122)</name>
    <dbReference type="NCBI Taxonomy" id="471853"/>
    <lineage>
        <taxon>Bacteria</taxon>
        <taxon>Bacillati</taxon>
        <taxon>Actinomycetota</taxon>
        <taxon>Actinomycetes</taxon>
        <taxon>Micrococcales</taxon>
        <taxon>Beutenbergiaceae</taxon>
        <taxon>Beutenbergia</taxon>
    </lineage>
</organism>
<comment type="function">
    <text evidence="1">Bifunctional enzyme that catalyzes both the deamination of dCTP to dUTP and the hydrolysis of dUTP to dUMP without releasing the toxic dUTP intermediate.</text>
</comment>
<comment type="catalytic activity">
    <reaction evidence="1">
        <text>dCTP + 2 H2O = dUMP + NH4(+) + diphosphate</text>
        <dbReference type="Rhea" id="RHEA:19205"/>
        <dbReference type="ChEBI" id="CHEBI:15377"/>
        <dbReference type="ChEBI" id="CHEBI:28938"/>
        <dbReference type="ChEBI" id="CHEBI:33019"/>
        <dbReference type="ChEBI" id="CHEBI:61481"/>
        <dbReference type="ChEBI" id="CHEBI:246422"/>
        <dbReference type="EC" id="3.5.4.30"/>
    </reaction>
</comment>
<comment type="pathway">
    <text evidence="1">Pyrimidine metabolism; dUMP biosynthesis; dUMP from dCTP: step 1/1.</text>
</comment>
<comment type="subunit">
    <text evidence="1">Homotrimer.</text>
</comment>
<comment type="similarity">
    <text evidence="1">Belongs to the dCTP deaminase family.</text>
</comment>
<name>DCDB_BEUC1</name>
<reference key="1">
    <citation type="journal article" date="2009" name="Stand. Genomic Sci.">
        <title>Complete genome sequence of Beutenbergia cavernae type strain (HKI 0122).</title>
        <authorList>
            <person name="Land M."/>
            <person name="Pukall R."/>
            <person name="Abt B."/>
            <person name="Goker M."/>
            <person name="Rohde M."/>
            <person name="Glavina Del Rio T."/>
            <person name="Tice H."/>
            <person name="Copeland A."/>
            <person name="Cheng J.F."/>
            <person name="Lucas S."/>
            <person name="Chen F."/>
            <person name="Nolan M."/>
            <person name="Bruce D."/>
            <person name="Goodwin L."/>
            <person name="Pitluck S."/>
            <person name="Ivanova N."/>
            <person name="Mavromatis K."/>
            <person name="Ovchinnikova G."/>
            <person name="Pati A."/>
            <person name="Chen A."/>
            <person name="Palaniappan K."/>
            <person name="Hauser L."/>
            <person name="Chang Y.J."/>
            <person name="Jefferies C.C."/>
            <person name="Saunders E."/>
            <person name="Brettin T."/>
            <person name="Detter J.C."/>
            <person name="Han C."/>
            <person name="Chain P."/>
            <person name="Bristow J."/>
            <person name="Eisen J.A."/>
            <person name="Markowitz V."/>
            <person name="Hugenholtz P."/>
            <person name="Kyrpides N.C."/>
            <person name="Klenk H.P."/>
            <person name="Lapidus A."/>
        </authorList>
    </citation>
    <scope>NUCLEOTIDE SEQUENCE [LARGE SCALE GENOMIC DNA]</scope>
    <source>
        <strain>ATCC BAA-8 / DSM 12333 / CCUG 43141 / JCM 11478 / NBRC 16432 / NCIMB 13614 / HKI 0122</strain>
    </source>
</reference>
<proteinExistence type="inferred from homology"/>
<evidence type="ECO:0000255" key="1">
    <source>
        <dbReference type="HAMAP-Rule" id="MF_00146"/>
    </source>
</evidence>
<evidence type="ECO:0000256" key="2">
    <source>
        <dbReference type="SAM" id="MobiDB-lite"/>
    </source>
</evidence>
<protein>
    <recommendedName>
        <fullName evidence="1">dCTP deaminase, dUMP-forming</fullName>
        <ecNumber evidence="1">3.5.4.30</ecNumber>
    </recommendedName>
    <alternativeName>
        <fullName evidence="1">Bifunctional dCTP deaminase:dUTPase</fullName>
    </alternativeName>
    <alternativeName>
        <fullName evidence="1">DCD-DUT</fullName>
    </alternativeName>
</protein>
<gene>
    <name evidence="1" type="primary">dcd</name>
    <name type="ordered locus">Bcav_3823</name>
</gene>
<feature type="chain" id="PRO_1000203355" description="dCTP deaminase, dUMP-forming">
    <location>
        <begin position="1"/>
        <end position="192"/>
    </location>
</feature>
<feature type="region of interest" description="Disordered" evidence="2">
    <location>
        <begin position="162"/>
        <end position="192"/>
    </location>
</feature>
<feature type="compositionally biased region" description="Polar residues" evidence="2">
    <location>
        <begin position="171"/>
        <end position="181"/>
    </location>
</feature>
<feature type="compositionally biased region" description="Basic residues" evidence="2">
    <location>
        <begin position="182"/>
        <end position="192"/>
    </location>
</feature>
<feature type="active site" description="Proton donor/acceptor" evidence="1">
    <location>
        <position position="129"/>
    </location>
</feature>
<feature type="binding site" evidence="1">
    <location>
        <begin position="101"/>
        <end position="106"/>
    </location>
    <ligand>
        <name>dCTP</name>
        <dbReference type="ChEBI" id="CHEBI:61481"/>
    </ligand>
</feature>
<feature type="binding site" evidence="1">
    <location>
        <position position="119"/>
    </location>
    <ligand>
        <name>dCTP</name>
        <dbReference type="ChEBI" id="CHEBI:61481"/>
    </ligand>
</feature>
<feature type="binding site" evidence="1">
    <location>
        <begin position="127"/>
        <end position="129"/>
    </location>
    <ligand>
        <name>dCTP</name>
        <dbReference type="ChEBI" id="CHEBI:61481"/>
    </ligand>
</feature>
<feature type="binding site" evidence="1">
    <location>
        <position position="148"/>
    </location>
    <ligand>
        <name>dCTP</name>
        <dbReference type="ChEBI" id="CHEBI:61481"/>
    </ligand>
</feature>
<feature type="binding site" evidence="1">
    <location>
        <position position="162"/>
    </location>
    <ligand>
        <name>dCTP</name>
        <dbReference type="ChEBI" id="CHEBI:61481"/>
    </ligand>
</feature>
<feature type="binding site" evidence="1">
    <location>
        <position position="174"/>
    </location>
    <ligand>
        <name>dCTP</name>
        <dbReference type="ChEBI" id="CHEBI:61481"/>
    </ligand>
</feature>
<feature type="site" description="Important for bifunctional activity" evidence="1">
    <location>
        <begin position="116"/>
        <end position="117"/>
    </location>
</feature>
<sequence length="192" mass="21171">MLLSDRDIRAEIGSGRVALDPFDDAMVQPSSVDVRLDRYFRLFDNHKYAVIDPAEDQPELTRLVEVDPDEAFVLHPGEFVLGSTHETITLPDDVAARLEGKSSLGRLGLLTHSTAGFIDPGFTGHVTLELSNVATLPIMLWPGMKIGQLCFFRLSSPAERPYGSGADGSRYQGQRGPTASRSHVKFHRTHVE</sequence>
<dbReference type="EC" id="3.5.4.30" evidence="1"/>
<dbReference type="EMBL" id="CP001618">
    <property type="protein sequence ID" value="ACQ82065.1"/>
    <property type="molecule type" value="Genomic_DNA"/>
</dbReference>
<dbReference type="RefSeq" id="WP_015884302.1">
    <property type="nucleotide sequence ID" value="NC_012669.1"/>
</dbReference>
<dbReference type="SMR" id="C5C4E1"/>
<dbReference type="STRING" id="471853.Bcav_3823"/>
<dbReference type="KEGG" id="bcv:Bcav_3823"/>
<dbReference type="eggNOG" id="COG0717">
    <property type="taxonomic scope" value="Bacteria"/>
</dbReference>
<dbReference type="HOGENOM" id="CLU_087476_2_0_11"/>
<dbReference type="OrthoDB" id="9780956at2"/>
<dbReference type="UniPathway" id="UPA00610">
    <property type="reaction ID" value="UER00667"/>
</dbReference>
<dbReference type="Proteomes" id="UP000007962">
    <property type="component" value="Chromosome"/>
</dbReference>
<dbReference type="GO" id="GO:0033973">
    <property type="term" value="F:dCTP deaminase (dUMP-forming) activity"/>
    <property type="evidence" value="ECO:0007669"/>
    <property type="project" value="UniProtKB-UniRule"/>
</dbReference>
<dbReference type="GO" id="GO:0008829">
    <property type="term" value="F:dCTP deaminase activity"/>
    <property type="evidence" value="ECO:0007669"/>
    <property type="project" value="InterPro"/>
</dbReference>
<dbReference type="GO" id="GO:0000166">
    <property type="term" value="F:nucleotide binding"/>
    <property type="evidence" value="ECO:0007669"/>
    <property type="project" value="UniProtKB-KW"/>
</dbReference>
<dbReference type="GO" id="GO:0006226">
    <property type="term" value="P:dUMP biosynthetic process"/>
    <property type="evidence" value="ECO:0007669"/>
    <property type="project" value="UniProtKB-UniRule"/>
</dbReference>
<dbReference type="GO" id="GO:0006229">
    <property type="term" value="P:dUTP biosynthetic process"/>
    <property type="evidence" value="ECO:0007669"/>
    <property type="project" value="InterPro"/>
</dbReference>
<dbReference type="GO" id="GO:0015949">
    <property type="term" value="P:nucleobase-containing small molecule interconversion"/>
    <property type="evidence" value="ECO:0007669"/>
    <property type="project" value="TreeGrafter"/>
</dbReference>
<dbReference type="CDD" id="cd07557">
    <property type="entry name" value="trimeric_dUTPase"/>
    <property type="match status" value="1"/>
</dbReference>
<dbReference type="FunFam" id="2.70.40.10:FF:000005">
    <property type="entry name" value="dCTP deaminase, dUMP-forming"/>
    <property type="match status" value="1"/>
</dbReference>
<dbReference type="Gene3D" id="2.70.40.10">
    <property type="match status" value="1"/>
</dbReference>
<dbReference type="HAMAP" id="MF_00146">
    <property type="entry name" value="dCTP_deaminase"/>
    <property type="match status" value="1"/>
</dbReference>
<dbReference type="InterPro" id="IPR011962">
    <property type="entry name" value="dCTP_deaminase"/>
</dbReference>
<dbReference type="InterPro" id="IPR036157">
    <property type="entry name" value="dUTPase-like_sf"/>
</dbReference>
<dbReference type="InterPro" id="IPR033704">
    <property type="entry name" value="dUTPase_trimeric"/>
</dbReference>
<dbReference type="NCBIfam" id="TIGR02274">
    <property type="entry name" value="dCTP_deam"/>
    <property type="match status" value="1"/>
</dbReference>
<dbReference type="PANTHER" id="PTHR42680">
    <property type="entry name" value="DCTP DEAMINASE"/>
    <property type="match status" value="1"/>
</dbReference>
<dbReference type="PANTHER" id="PTHR42680:SF3">
    <property type="entry name" value="DCTP DEAMINASE"/>
    <property type="match status" value="1"/>
</dbReference>
<dbReference type="Pfam" id="PF22769">
    <property type="entry name" value="DCD"/>
    <property type="match status" value="1"/>
</dbReference>
<dbReference type="SUPFAM" id="SSF51283">
    <property type="entry name" value="dUTPase-like"/>
    <property type="match status" value="1"/>
</dbReference>
<keyword id="KW-0378">Hydrolase</keyword>
<keyword id="KW-0546">Nucleotide metabolism</keyword>
<keyword id="KW-0547">Nucleotide-binding</keyword>
<keyword id="KW-1185">Reference proteome</keyword>